<comment type="function">
    <text evidence="1">Cell wall formation.</text>
</comment>
<comment type="catalytic activity">
    <reaction evidence="1">
        <text>UDP-N-acetyl-alpha-D-muramate + NADP(+) = UDP-N-acetyl-3-O-(1-carboxyvinyl)-alpha-D-glucosamine + NADPH + H(+)</text>
        <dbReference type="Rhea" id="RHEA:12248"/>
        <dbReference type="ChEBI" id="CHEBI:15378"/>
        <dbReference type="ChEBI" id="CHEBI:57783"/>
        <dbReference type="ChEBI" id="CHEBI:58349"/>
        <dbReference type="ChEBI" id="CHEBI:68483"/>
        <dbReference type="ChEBI" id="CHEBI:70757"/>
        <dbReference type="EC" id="1.3.1.98"/>
    </reaction>
</comment>
<comment type="cofactor">
    <cofactor evidence="1">
        <name>FAD</name>
        <dbReference type="ChEBI" id="CHEBI:57692"/>
    </cofactor>
</comment>
<comment type="pathway">
    <text evidence="1">Cell wall biogenesis; peptidoglycan biosynthesis.</text>
</comment>
<comment type="subcellular location">
    <subcellularLocation>
        <location evidence="1">Cytoplasm</location>
    </subcellularLocation>
</comment>
<comment type="similarity">
    <text evidence="1">Belongs to the MurB family.</text>
</comment>
<reference key="1">
    <citation type="journal article" date="2004" name="Nucleic Acids Res.">
        <title>Comparative analysis of the Borrelia garinii genome.</title>
        <authorList>
            <person name="Gloeckner G."/>
            <person name="Lehmann R."/>
            <person name="Romualdi A."/>
            <person name="Pradella S."/>
            <person name="Schulte-Spechtel U."/>
            <person name="Schilhabel M."/>
            <person name="Wilske B."/>
            <person name="Suehnel J."/>
            <person name="Platzer M."/>
        </authorList>
    </citation>
    <scope>NUCLEOTIDE SEQUENCE [LARGE SCALE GENOMIC DNA]</scope>
    <source>
        <strain>ATCC BAA-2496 / DSM 23469 / PBi</strain>
    </source>
</reference>
<accession>Q660S4</accession>
<feature type="chain" id="PRO_0000224668" description="UDP-N-acetylenolpyruvoylglucosamine reductase">
    <location>
        <begin position="1"/>
        <end position="306"/>
    </location>
</feature>
<feature type="domain" description="FAD-binding PCMH-type" evidence="1">
    <location>
        <begin position="28"/>
        <end position="194"/>
    </location>
</feature>
<feature type="active site" description="Proton donor" evidence="1">
    <location>
        <position position="223"/>
    </location>
</feature>
<feature type="active site" evidence="1">
    <location>
        <position position="295"/>
    </location>
</feature>
<protein>
    <recommendedName>
        <fullName evidence="1">UDP-N-acetylenolpyruvoylglucosamine reductase</fullName>
        <ecNumber evidence="1">1.3.1.98</ecNumber>
    </recommendedName>
    <alternativeName>
        <fullName evidence="1">UDP-N-acetylmuramate dehydrogenase</fullName>
    </alternativeName>
</protein>
<organism>
    <name type="scientific">Borrelia garinii subsp. bavariensis (strain ATCC BAA-2496 / DSM 23469 / PBi)</name>
    <name type="common">Borreliella bavariensis</name>
    <dbReference type="NCBI Taxonomy" id="290434"/>
    <lineage>
        <taxon>Bacteria</taxon>
        <taxon>Pseudomonadati</taxon>
        <taxon>Spirochaetota</taxon>
        <taxon>Spirochaetia</taxon>
        <taxon>Spirochaetales</taxon>
        <taxon>Borreliaceae</taxon>
        <taxon>Borreliella</taxon>
    </lineage>
</organism>
<evidence type="ECO:0000255" key="1">
    <source>
        <dbReference type="HAMAP-Rule" id="MF_00037"/>
    </source>
</evidence>
<proteinExistence type="inferred from homology"/>
<gene>
    <name evidence="1" type="primary">murB</name>
    <name type="ordered locus">BG0611</name>
</gene>
<name>MURB_BORGP</name>
<dbReference type="EC" id="1.3.1.98" evidence="1"/>
<dbReference type="EMBL" id="CP000013">
    <property type="protein sequence ID" value="AAU07447.1"/>
    <property type="molecule type" value="Genomic_DNA"/>
</dbReference>
<dbReference type="RefSeq" id="WP_011193905.1">
    <property type="nucleotide sequence ID" value="NZ_CP028872.1"/>
</dbReference>
<dbReference type="SMR" id="Q660S4"/>
<dbReference type="GeneID" id="45161391"/>
<dbReference type="KEGG" id="bga:BG0611"/>
<dbReference type="eggNOG" id="COG0812">
    <property type="taxonomic scope" value="Bacteria"/>
</dbReference>
<dbReference type="HOGENOM" id="CLU_035304_1_1_12"/>
<dbReference type="OrthoDB" id="9804753at2"/>
<dbReference type="UniPathway" id="UPA00219"/>
<dbReference type="Proteomes" id="UP000002276">
    <property type="component" value="Chromosome"/>
</dbReference>
<dbReference type="GO" id="GO:0005829">
    <property type="term" value="C:cytosol"/>
    <property type="evidence" value="ECO:0007669"/>
    <property type="project" value="TreeGrafter"/>
</dbReference>
<dbReference type="GO" id="GO:0071949">
    <property type="term" value="F:FAD binding"/>
    <property type="evidence" value="ECO:0007669"/>
    <property type="project" value="InterPro"/>
</dbReference>
<dbReference type="GO" id="GO:0008762">
    <property type="term" value="F:UDP-N-acetylmuramate dehydrogenase activity"/>
    <property type="evidence" value="ECO:0007669"/>
    <property type="project" value="UniProtKB-UniRule"/>
</dbReference>
<dbReference type="GO" id="GO:0051301">
    <property type="term" value="P:cell division"/>
    <property type="evidence" value="ECO:0007669"/>
    <property type="project" value="UniProtKB-KW"/>
</dbReference>
<dbReference type="GO" id="GO:0071555">
    <property type="term" value="P:cell wall organization"/>
    <property type="evidence" value="ECO:0007669"/>
    <property type="project" value="UniProtKB-KW"/>
</dbReference>
<dbReference type="GO" id="GO:0009252">
    <property type="term" value="P:peptidoglycan biosynthetic process"/>
    <property type="evidence" value="ECO:0007669"/>
    <property type="project" value="UniProtKB-UniRule"/>
</dbReference>
<dbReference type="GO" id="GO:0008360">
    <property type="term" value="P:regulation of cell shape"/>
    <property type="evidence" value="ECO:0007669"/>
    <property type="project" value="UniProtKB-KW"/>
</dbReference>
<dbReference type="Gene3D" id="3.30.465.10">
    <property type="match status" value="1"/>
</dbReference>
<dbReference type="Gene3D" id="3.90.78.10">
    <property type="entry name" value="UDP-N-acetylenolpyruvoylglucosamine reductase, C-terminal domain"/>
    <property type="match status" value="1"/>
</dbReference>
<dbReference type="Gene3D" id="3.30.43.10">
    <property type="entry name" value="Uridine Diphospho-n-acetylenolpyruvylglucosamine Reductase, domain 2"/>
    <property type="match status" value="1"/>
</dbReference>
<dbReference type="HAMAP" id="MF_00037">
    <property type="entry name" value="MurB"/>
    <property type="match status" value="1"/>
</dbReference>
<dbReference type="InterPro" id="IPR016166">
    <property type="entry name" value="FAD-bd_PCMH"/>
</dbReference>
<dbReference type="InterPro" id="IPR036318">
    <property type="entry name" value="FAD-bd_PCMH-like_sf"/>
</dbReference>
<dbReference type="InterPro" id="IPR016167">
    <property type="entry name" value="FAD-bd_PCMH_sub1"/>
</dbReference>
<dbReference type="InterPro" id="IPR016169">
    <property type="entry name" value="FAD-bd_PCMH_sub2"/>
</dbReference>
<dbReference type="InterPro" id="IPR003170">
    <property type="entry name" value="MurB"/>
</dbReference>
<dbReference type="InterPro" id="IPR011601">
    <property type="entry name" value="MurB_C"/>
</dbReference>
<dbReference type="InterPro" id="IPR036635">
    <property type="entry name" value="MurB_C_sf"/>
</dbReference>
<dbReference type="InterPro" id="IPR006094">
    <property type="entry name" value="Oxid_FAD_bind_N"/>
</dbReference>
<dbReference type="NCBIfam" id="TIGR00179">
    <property type="entry name" value="murB"/>
    <property type="match status" value="1"/>
</dbReference>
<dbReference type="NCBIfam" id="NF010480">
    <property type="entry name" value="PRK13905.1"/>
    <property type="match status" value="1"/>
</dbReference>
<dbReference type="PANTHER" id="PTHR21071">
    <property type="entry name" value="UDP-N-ACETYLENOLPYRUVOYLGLUCOSAMINE REDUCTASE"/>
    <property type="match status" value="1"/>
</dbReference>
<dbReference type="PANTHER" id="PTHR21071:SF4">
    <property type="entry name" value="UDP-N-ACETYLENOLPYRUVOYLGLUCOSAMINE REDUCTASE"/>
    <property type="match status" value="1"/>
</dbReference>
<dbReference type="Pfam" id="PF01565">
    <property type="entry name" value="FAD_binding_4"/>
    <property type="match status" value="1"/>
</dbReference>
<dbReference type="Pfam" id="PF02873">
    <property type="entry name" value="MurB_C"/>
    <property type="match status" value="1"/>
</dbReference>
<dbReference type="SUPFAM" id="SSF56176">
    <property type="entry name" value="FAD-binding/transporter-associated domain-like"/>
    <property type="match status" value="1"/>
</dbReference>
<dbReference type="SUPFAM" id="SSF56194">
    <property type="entry name" value="Uridine diphospho-N-Acetylenolpyruvylglucosamine reductase, MurB, C-terminal domain"/>
    <property type="match status" value="1"/>
</dbReference>
<dbReference type="PROSITE" id="PS51387">
    <property type="entry name" value="FAD_PCMH"/>
    <property type="match status" value="1"/>
</dbReference>
<keyword id="KW-0131">Cell cycle</keyword>
<keyword id="KW-0132">Cell division</keyword>
<keyword id="KW-0133">Cell shape</keyword>
<keyword id="KW-0961">Cell wall biogenesis/degradation</keyword>
<keyword id="KW-0963">Cytoplasm</keyword>
<keyword id="KW-0274">FAD</keyword>
<keyword id="KW-0285">Flavoprotein</keyword>
<keyword id="KW-0521">NADP</keyword>
<keyword id="KW-0560">Oxidoreductase</keyword>
<keyword id="KW-0573">Peptidoglycan synthesis</keyword>
<sequence length="306" mass="34753">MIKRLNNFFEKINIKPQTKNLINYTTYKIGNISKLFLIPKNIQEAENIFKAAIEEKITLFILGGGSNILVNDKEELDFPIIYTGHLNKIEVHDNKIVAECGANFENLCKIALNSSLSGLEFIYGLPGTLGGAVWMNARCFGNEISEILKKITFINDKGKTICKEFKKEDFKYKVSPFQNKNFFILKTELNLKKENKKIIEEKMNKNKQARINKGHYLFPSSGSTFKNNKSFLRPSGQIIEECKLKGLSVGGAEVSKYHGNFIININNATSNDIKSLIEKVKTEVYSKTGLLLEEEVLYIGFKNQKS</sequence>